<proteinExistence type="inferred from homology"/>
<accession>A8R3T0</accession>
<keyword id="KW-0010">Activator</keyword>
<keyword id="KW-0238">DNA-binding</keyword>
<keyword id="KW-0319">Glycerol metabolism</keyword>
<keyword id="KW-0597">Phosphoprotein</keyword>
<keyword id="KW-0804">Transcription</keyword>
<keyword id="KW-0805">Transcription regulation</keyword>
<dbReference type="EMBL" id="AB333783">
    <property type="protein sequence ID" value="BAF91145.1"/>
    <property type="molecule type" value="Genomic_DNA"/>
</dbReference>
<dbReference type="RefSeq" id="WP_043860164.1">
    <property type="nucleotide sequence ID" value="NZ_RJUR01000011.1"/>
</dbReference>
<dbReference type="SMR" id="A8R3T0"/>
<dbReference type="OrthoDB" id="9814495at2"/>
<dbReference type="GO" id="GO:0003677">
    <property type="term" value="F:DNA binding"/>
    <property type="evidence" value="ECO:0007669"/>
    <property type="project" value="UniProtKB-KW"/>
</dbReference>
<dbReference type="GO" id="GO:0006071">
    <property type="term" value="P:glycerol metabolic process"/>
    <property type="evidence" value="ECO:0007669"/>
    <property type="project" value="UniProtKB-KW"/>
</dbReference>
<dbReference type="GO" id="GO:0000160">
    <property type="term" value="P:phosphorelay signal transduction system"/>
    <property type="evidence" value="ECO:0007669"/>
    <property type="project" value="InterPro"/>
</dbReference>
<dbReference type="GO" id="GO:0006355">
    <property type="term" value="P:regulation of DNA-templated transcription"/>
    <property type="evidence" value="ECO:0007669"/>
    <property type="project" value="InterPro"/>
</dbReference>
<dbReference type="CDD" id="cd06170">
    <property type="entry name" value="LuxR_C_like"/>
    <property type="match status" value="1"/>
</dbReference>
<dbReference type="CDD" id="cd17535">
    <property type="entry name" value="REC_NarL-like"/>
    <property type="match status" value="1"/>
</dbReference>
<dbReference type="Gene3D" id="3.40.50.2300">
    <property type="match status" value="1"/>
</dbReference>
<dbReference type="InterPro" id="IPR011006">
    <property type="entry name" value="CheY-like_superfamily"/>
</dbReference>
<dbReference type="InterPro" id="IPR051015">
    <property type="entry name" value="RcsB_transcriptional_reg"/>
</dbReference>
<dbReference type="InterPro" id="IPR016032">
    <property type="entry name" value="Sig_transdc_resp-reg_C-effctor"/>
</dbReference>
<dbReference type="InterPro" id="IPR001789">
    <property type="entry name" value="Sig_transdc_resp-reg_receiver"/>
</dbReference>
<dbReference type="InterPro" id="IPR000792">
    <property type="entry name" value="Tscrpt_reg_LuxR_C"/>
</dbReference>
<dbReference type="PANTHER" id="PTHR45566">
    <property type="entry name" value="HTH-TYPE TRANSCRIPTIONAL REGULATOR YHJB-RELATED"/>
    <property type="match status" value="1"/>
</dbReference>
<dbReference type="PANTHER" id="PTHR45566:SF1">
    <property type="entry name" value="HTH-TYPE TRANSCRIPTIONAL REGULATOR YHJB-RELATED"/>
    <property type="match status" value="1"/>
</dbReference>
<dbReference type="Pfam" id="PF00196">
    <property type="entry name" value="GerE"/>
    <property type="match status" value="1"/>
</dbReference>
<dbReference type="Pfam" id="PF00072">
    <property type="entry name" value="Response_reg"/>
    <property type="match status" value="1"/>
</dbReference>
<dbReference type="PRINTS" id="PR00038">
    <property type="entry name" value="HTHLUXR"/>
</dbReference>
<dbReference type="SMART" id="SM00421">
    <property type="entry name" value="HTH_LUXR"/>
    <property type="match status" value="1"/>
</dbReference>
<dbReference type="SMART" id="SM00448">
    <property type="entry name" value="REC"/>
    <property type="match status" value="1"/>
</dbReference>
<dbReference type="SUPFAM" id="SSF46894">
    <property type="entry name" value="C-terminal effector domain of the bipartite response regulators"/>
    <property type="match status" value="1"/>
</dbReference>
<dbReference type="SUPFAM" id="SSF52172">
    <property type="entry name" value="CheY-like"/>
    <property type="match status" value="1"/>
</dbReference>
<dbReference type="PROSITE" id="PS00622">
    <property type="entry name" value="HTH_LUXR_1"/>
    <property type="match status" value="1"/>
</dbReference>
<dbReference type="PROSITE" id="PS50043">
    <property type="entry name" value="HTH_LUXR_2"/>
    <property type="match status" value="1"/>
</dbReference>
<dbReference type="PROSITE" id="PS50110">
    <property type="entry name" value="RESPONSE_REGULATORY"/>
    <property type="match status" value="1"/>
</dbReference>
<reference evidence="7 8" key="1">
    <citation type="journal article" date="2008" name="FEMS Microbiol. Lett.">
        <title>Disruption of quinoprotein ethanol dehydrogenase gene and adjacent genes in Pseudomonas putida HK5.</title>
        <authorList>
            <person name="Promden W."/>
            <person name="Vangnai A.S."/>
            <person name="Pongsawasdi P."/>
            <person name="Adachi O."/>
            <person name="Matsushita K."/>
            <person name="Toyama H."/>
        </authorList>
    </citation>
    <scope>NUCLEOTIDE SEQUENCE [GENOMIC DNA]</scope>
    <scope>FUNCTION</scope>
    <source>
        <strain evidence="8">HK5</strain>
    </source>
</reference>
<reference evidence="7" key="2">
    <citation type="journal article" date="2009" name="Microbiology">
        <title>Analysis of the promoter activities of the genes encoding three quinoprotein alcohol dehydrogenases in Pseudomonas putida HK5.</title>
        <authorList>
            <person name="Promden W."/>
            <person name="Vangnai A.S."/>
            <person name="Toyama H."/>
            <person name="Matsushita K."/>
            <person name="Pongsawasdi P."/>
        </authorList>
    </citation>
    <scope>FUNCTION</scope>
    <source>
        <strain evidence="5">HK5</strain>
    </source>
</reference>
<sequence>MYKILIADDHPLFREAIHNVITDGFPGSEVMETADLDSALSLTGQHDDLDLILLDLNMPGMHGLGGLINLRNEAPTIPVVIVSAEQDKQVVLQAITYGAVGFITKSSPRSQMTDAIEQILNGNVYLPPDIIRTQKSTGRRNQSEHAGFAPELLQALTRKQLLVLERMTKGESNKQIAYNLDIAETTVKAHVSAILRKLNVHNRVQAILSAGDIDFTAYLRR</sequence>
<organism>
    <name type="scientific">Pseudomonas putida</name>
    <name type="common">Arthrobacter siderocapsulatus</name>
    <dbReference type="NCBI Taxonomy" id="303"/>
    <lineage>
        <taxon>Bacteria</taxon>
        <taxon>Pseudomonadati</taxon>
        <taxon>Pseudomonadota</taxon>
        <taxon>Gammaproteobacteria</taxon>
        <taxon>Pseudomonadales</taxon>
        <taxon>Pseudomonadaceae</taxon>
        <taxon>Pseudomonas</taxon>
    </lineage>
</organism>
<protein>
    <recommendedName>
        <fullName evidence="6">Glycerol metabolism activator</fullName>
    </recommendedName>
    <alternativeName>
        <fullName evidence="8">DNA-binding response regulator</fullName>
    </alternativeName>
    <alternativeName>
        <fullName evidence="6">Protein AgmR</fullName>
    </alternativeName>
</protein>
<evidence type="ECO:0000250" key="1">
    <source>
        <dbReference type="UniProtKB" id="P36556"/>
    </source>
</evidence>
<evidence type="ECO:0000255" key="2">
    <source>
        <dbReference type="PROSITE-ProRule" id="PRU00169"/>
    </source>
</evidence>
<evidence type="ECO:0000255" key="3">
    <source>
        <dbReference type="PROSITE-ProRule" id="PRU00411"/>
    </source>
</evidence>
<evidence type="ECO:0000269" key="4">
    <source>
    </source>
</evidence>
<evidence type="ECO:0000269" key="5">
    <source>
    </source>
</evidence>
<evidence type="ECO:0000303" key="6">
    <source>
    </source>
</evidence>
<evidence type="ECO:0000305" key="7"/>
<evidence type="ECO:0000312" key="8">
    <source>
        <dbReference type="EMBL" id="BAF91145.1"/>
    </source>
</evidence>
<feature type="chain" id="PRO_0000419532" description="Glycerol metabolism activator">
    <location>
        <begin position="1"/>
        <end position="221"/>
    </location>
</feature>
<feature type="domain" description="Response regulatory" evidence="2">
    <location>
        <begin position="3"/>
        <end position="120"/>
    </location>
</feature>
<feature type="domain" description="HTH luxR-type" evidence="3">
    <location>
        <begin position="149"/>
        <end position="214"/>
    </location>
</feature>
<feature type="DNA-binding region" description="H-T-H motif" evidence="3">
    <location>
        <begin position="173"/>
        <end position="192"/>
    </location>
</feature>
<feature type="modified residue" description="4-aspartylphosphate" evidence="1 2">
    <location>
        <position position="55"/>
    </location>
</feature>
<comment type="function">
    <text evidence="4 5">Positive activator for glycerol metabolism. Regulates the expression of qedA in a positive manner and governs the expression of ADH I and ADH IIB. General regulator of quinoprotein ethanol oxidation and affects expression of ADH IIG activity but is not the sole regulator.</text>
</comment>
<gene>
    <name evidence="8" type="primary">agmR</name>
</gene>
<name>AGMR_PSEPU</name>